<dbReference type="EMBL" id="X52486">
    <property type="protein sequence ID" value="CAA36728.1"/>
    <property type="status" value="ALT_SEQ"/>
    <property type="molecule type" value="mRNA"/>
</dbReference>
<dbReference type="EMBL" id="M87499">
    <property type="protein sequence ID" value="AAB05817.1"/>
    <property type="status" value="ALT_SEQ"/>
    <property type="molecule type" value="Genomic_DNA"/>
</dbReference>
<dbReference type="EMBL" id="AK026075">
    <property type="protein sequence ID" value="BAB15351.1"/>
    <property type="molecule type" value="mRNA"/>
</dbReference>
<dbReference type="EMBL" id="AK290030">
    <property type="protein sequence ID" value="BAF82719.1"/>
    <property type="molecule type" value="mRNA"/>
</dbReference>
<dbReference type="EMBL" id="AC026704">
    <property type="status" value="NOT_ANNOTATED_CDS"/>
    <property type="molecule type" value="Genomic_DNA"/>
</dbReference>
<dbReference type="EMBL" id="CH471123">
    <property type="protein sequence ID" value="EAW54913.1"/>
    <property type="molecule type" value="Genomic_DNA"/>
</dbReference>
<dbReference type="EMBL" id="BC004877">
    <property type="protein sequence ID" value="AAH04877.1"/>
    <property type="molecule type" value="mRNA"/>
</dbReference>
<dbReference type="CCDS" id="CCDS34157.1">
    <molecule id="P22674-1"/>
</dbReference>
<dbReference type="PIR" id="S14266">
    <property type="entry name" value="S14266"/>
</dbReference>
<dbReference type="RefSeq" id="NP_066970.3">
    <molecule id="P22674-1"/>
    <property type="nucleotide sequence ID" value="NM_021147.5"/>
</dbReference>
<dbReference type="SMR" id="P22674"/>
<dbReference type="BioGRID" id="115595">
    <property type="interactions" value="31"/>
</dbReference>
<dbReference type="DIP" id="DIP-24234N"/>
<dbReference type="FunCoup" id="P22674">
    <property type="interactions" value="432"/>
</dbReference>
<dbReference type="IntAct" id="P22674">
    <property type="interactions" value="25"/>
</dbReference>
<dbReference type="MINT" id="P22674"/>
<dbReference type="STRING" id="9606.ENSP00000282572"/>
<dbReference type="BindingDB" id="P22674"/>
<dbReference type="ChEMBL" id="CHEMBL4105895"/>
<dbReference type="iPTMnet" id="P22674"/>
<dbReference type="PhosphoSitePlus" id="P22674"/>
<dbReference type="BioMuta" id="CCNO"/>
<dbReference type="DMDM" id="118572733"/>
<dbReference type="jPOST" id="P22674"/>
<dbReference type="MassIVE" id="P22674"/>
<dbReference type="PaxDb" id="9606-ENSP00000282572"/>
<dbReference type="PeptideAtlas" id="P22674"/>
<dbReference type="ProteomicsDB" id="54013">
    <molecule id="P22674-1"/>
</dbReference>
<dbReference type="ProteomicsDB" id="54014">
    <molecule id="P22674-2"/>
</dbReference>
<dbReference type="Antibodypedia" id="11078">
    <property type="antibodies" value="217 antibodies from 25 providers"/>
</dbReference>
<dbReference type="DNASU" id="10309"/>
<dbReference type="Ensembl" id="ENST00000282572.5">
    <molecule id="P22674-1"/>
    <property type="protein sequence ID" value="ENSP00000282572.4"/>
    <property type="gene ID" value="ENSG00000152669.9"/>
</dbReference>
<dbReference type="Ensembl" id="ENST00000501463.2">
    <molecule id="P22674-2"/>
    <property type="protein sequence ID" value="ENSP00000422485.1"/>
    <property type="gene ID" value="ENSG00000152669.9"/>
</dbReference>
<dbReference type="GeneID" id="10309"/>
<dbReference type="KEGG" id="hsa:10309"/>
<dbReference type="MANE-Select" id="ENST00000282572.5">
    <property type="protein sequence ID" value="ENSP00000282572.4"/>
    <property type="RefSeq nucleotide sequence ID" value="NM_021147.5"/>
    <property type="RefSeq protein sequence ID" value="NP_066970.3"/>
</dbReference>
<dbReference type="UCSC" id="uc003jpv.4">
    <molecule id="P22674-1"/>
    <property type="organism name" value="human"/>
</dbReference>
<dbReference type="AGR" id="HGNC:18576"/>
<dbReference type="CTD" id="10309"/>
<dbReference type="DisGeNET" id="10309"/>
<dbReference type="GeneCards" id="CCNO"/>
<dbReference type="GeneReviews" id="CCNO"/>
<dbReference type="HGNC" id="HGNC:18576">
    <property type="gene designation" value="CCNO"/>
</dbReference>
<dbReference type="HPA" id="ENSG00000152669">
    <property type="expression patterns" value="Tissue enhanced (choroid plexus, pancreas, testis)"/>
</dbReference>
<dbReference type="MalaCards" id="CCNO"/>
<dbReference type="MIM" id="607752">
    <property type="type" value="gene"/>
</dbReference>
<dbReference type="MIM" id="615872">
    <property type="type" value="phenotype"/>
</dbReference>
<dbReference type="neXtProt" id="NX_P22674"/>
<dbReference type="OpenTargets" id="ENSG00000152669"/>
<dbReference type="Orphanet" id="244">
    <property type="disease" value="Primary ciliary dyskinesia"/>
</dbReference>
<dbReference type="PharmGKB" id="PA38350"/>
<dbReference type="VEuPathDB" id="HostDB:ENSG00000152669"/>
<dbReference type="eggNOG" id="KOG0653">
    <property type="taxonomic scope" value="Eukaryota"/>
</dbReference>
<dbReference type="GeneTree" id="ENSGT00940000155998"/>
<dbReference type="HOGENOM" id="CLU_1926882_0_0_1"/>
<dbReference type="InParanoid" id="P22674"/>
<dbReference type="OMA" id="CSPRISH"/>
<dbReference type="OrthoDB" id="5590282at2759"/>
<dbReference type="PAN-GO" id="P22674">
    <property type="GO annotations" value="6 GO annotations based on evolutionary models"/>
</dbReference>
<dbReference type="PhylomeDB" id="P22674"/>
<dbReference type="TreeFam" id="TF332057"/>
<dbReference type="BRENDA" id="3.2.2.27">
    <property type="organism ID" value="2681"/>
</dbReference>
<dbReference type="PathwayCommons" id="P22674"/>
<dbReference type="SignaLink" id="P22674"/>
<dbReference type="SIGNOR" id="P22674"/>
<dbReference type="BioGRID-ORCS" id="10309">
    <property type="hits" value="6 hits in 1157 CRISPR screens"/>
</dbReference>
<dbReference type="GeneWiki" id="Cyclin_O"/>
<dbReference type="GenomeRNAi" id="10309"/>
<dbReference type="Pharos" id="P22674">
    <property type="development level" value="Tbio"/>
</dbReference>
<dbReference type="PRO" id="PR:P22674"/>
<dbReference type="Proteomes" id="UP000005640">
    <property type="component" value="Chromosome 5"/>
</dbReference>
<dbReference type="RNAct" id="P22674">
    <property type="molecule type" value="protein"/>
</dbReference>
<dbReference type="Bgee" id="ENSG00000152669">
    <property type="expression patterns" value="Expressed in oocyte and 117 other cell types or tissues"/>
</dbReference>
<dbReference type="GO" id="GO:0034451">
    <property type="term" value="C:centriolar satellite"/>
    <property type="evidence" value="ECO:0000314"/>
    <property type="project" value="HPA"/>
</dbReference>
<dbReference type="GO" id="GO:0000307">
    <property type="term" value="C:cyclin-dependent protein kinase holoenzyme complex"/>
    <property type="evidence" value="ECO:0000318"/>
    <property type="project" value="GO_Central"/>
</dbReference>
<dbReference type="GO" id="GO:0005737">
    <property type="term" value="C:cytoplasm"/>
    <property type="evidence" value="ECO:0000314"/>
    <property type="project" value="UniProtKB"/>
</dbReference>
<dbReference type="GO" id="GO:0005815">
    <property type="term" value="C:microtubule organizing center"/>
    <property type="evidence" value="ECO:0000318"/>
    <property type="project" value="GO_Central"/>
</dbReference>
<dbReference type="GO" id="GO:0005730">
    <property type="term" value="C:nucleolus"/>
    <property type="evidence" value="ECO:0000314"/>
    <property type="project" value="HPA"/>
</dbReference>
<dbReference type="GO" id="GO:0005634">
    <property type="term" value="C:nucleus"/>
    <property type="evidence" value="ECO:0000318"/>
    <property type="project" value="GO_Central"/>
</dbReference>
<dbReference type="GO" id="GO:0016538">
    <property type="term" value="F:cyclin-dependent protein serine/threonine kinase regulator activity"/>
    <property type="evidence" value="ECO:0000318"/>
    <property type="project" value="GO_Central"/>
</dbReference>
<dbReference type="GO" id="GO:0051301">
    <property type="term" value="P:cell division"/>
    <property type="evidence" value="ECO:0007669"/>
    <property type="project" value="UniProtKB-KW"/>
</dbReference>
<dbReference type="GO" id="GO:0060271">
    <property type="term" value="P:cilium assembly"/>
    <property type="evidence" value="ECO:0000315"/>
    <property type="project" value="UniProtKB"/>
</dbReference>
<dbReference type="GO" id="GO:0000082">
    <property type="term" value="P:G1/S transition of mitotic cell cycle"/>
    <property type="evidence" value="ECO:0000318"/>
    <property type="project" value="GO_Central"/>
</dbReference>
<dbReference type="GO" id="GO:0000278">
    <property type="term" value="P:mitotic cell cycle"/>
    <property type="evidence" value="ECO:0000314"/>
    <property type="project" value="UniProtKB"/>
</dbReference>
<dbReference type="GO" id="GO:1903251">
    <property type="term" value="P:multi-ciliated epithelial cell differentiation"/>
    <property type="evidence" value="ECO:0000315"/>
    <property type="project" value="UniProtKB"/>
</dbReference>
<dbReference type="GO" id="GO:0072520">
    <property type="term" value="P:seminiferous tubule development"/>
    <property type="evidence" value="ECO:0007669"/>
    <property type="project" value="Ensembl"/>
</dbReference>
<dbReference type="GO" id="GO:0007338">
    <property type="term" value="P:single fertilization"/>
    <property type="evidence" value="ECO:0007669"/>
    <property type="project" value="Ensembl"/>
</dbReference>
<dbReference type="GO" id="GO:0007283">
    <property type="term" value="P:spermatogenesis"/>
    <property type="evidence" value="ECO:0007669"/>
    <property type="project" value="Ensembl"/>
</dbReference>
<dbReference type="CDD" id="cd20536">
    <property type="entry name" value="CYCLIN_CCNO_rpt1"/>
    <property type="match status" value="1"/>
</dbReference>
<dbReference type="CDD" id="cd20722">
    <property type="entry name" value="CYCLIN_CCNO_rpt2"/>
    <property type="match status" value="1"/>
</dbReference>
<dbReference type="FunFam" id="1.10.472.10:FF:000064">
    <property type="entry name" value="Cyclin O"/>
    <property type="match status" value="1"/>
</dbReference>
<dbReference type="FunFam" id="1.10.472.10:FF:000061">
    <property type="entry name" value="cyclin-O"/>
    <property type="match status" value="1"/>
</dbReference>
<dbReference type="Gene3D" id="1.10.472.10">
    <property type="entry name" value="Cyclin-like"/>
    <property type="match status" value="2"/>
</dbReference>
<dbReference type="InterPro" id="IPR039361">
    <property type="entry name" value="Cyclin"/>
</dbReference>
<dbReference type="InterPro" id="IPR013763">
    <property type="entry name" value="Cyclin-like_dom"/>
</dbReference>
<dbReference type="InterPro" id="IPR036915">
    <property type="entry name" value="Cyclin-like_sf"/>
</dbReference>
<dbReference type="InterPro" id="IPR004367">
    <property type="entry name" value="Cyclin_C-dom"/>
</dbReference>
<dbReference type="InterPro" id="IPR006671">
    <property type="entry name" value="Cyclin_N"/>
</dbReference>
<dbReference type="PANTHER" id="PTHR10177">
    <property type="entry name" value="CYCLINS"/>
    <property type="match status" value="1"/>
</dbReference>
<dbReference type="Pfam" id="PF02984">
    <property type="entry name" value="Cyclin_C"/>
    <property type="match status" value="1"/>
</dbReference>
<dbReference type="Pfam" id="PF00134">
    <property type="entry name" value="Cyclin_N"/>
    <property type="match status" value="1"/>
</dbReference>
<dbReference type="SMART" id="SM00385">
    <property type="entry name" value="CYCLIN"/>
    <property type="match status" value="2"/>
</dbReference>
<dbReference type="SMART" id="SM01332">
    <property type="entry name" value="Cyclin_C"/>
    <property type="match status" value="1"/>
</dbReference>
<dbReference type="SUPFAM" id="SSF47954">
    <property type="entry name" value="Cyclin-like"/>
    <property type="match status" value="2"/>
</dbReference>
<reference key="1">
    <citation type="journal article" date="1991" name="Biochim. Biophys. Acta">
        <title>Isolation and characterization of a human cDNA encoding uracil-DNA glycosylase.</title>
        <authorList>
            <person name="Muller S.J."/>
            <person name="Caradonna S."/>
        </authorList>
    </citation>
    <scope>NUCLEOTIDE SEQUENCE [GENOMIC DNA / MRNA]</scope>
    <source>
        <tissue>T-cell</tissue>
    </source>
</reference>
<reference key="2">
    <citation type="journal article" date="2004" name="Nat. Genet.">
        <title>Complete sequencing and characterization of 21,243 full-length human cDNAs.</title>
        <authorList>
            <person name="Ota T."/>
            <person name="Suzuki Y."/>
            <person name="Nishikawa T."/>
            <person name="Otsuki T."/>
            <person name="Sugiyama T."/>
            <person name="Irie R."/>
            <person name="Wakamatsu A."/>
            <person name="Hayashi K."/>
            <person name="Sato H."/>
            <person name="Nagai K."/>
            <person name="Kimura K."/>
            <person name="Makita H."/>
            <person name="Sekine M."/>
            <person name="Obayashi M."/>
            <person name="Nishi T."/>
            <person name="Shibahara T."/>
            <person name="Tanaka T."/>
            <person name="Ishii S."/>
            <person name="Yamamoto J."/>
            <person name="Saito K."/>
            <person name="Kawai Y."/>
            <person name="Isono Y."/>
            <person name="Nakamura Y."/>
            <person name="Nagahari K."/>
            <person name="Murakami K."/>
            <person name="Yasuda T."/>
            <person name="Iwayanagi T."/>
            <person name="Wagatsuma M."/>
            <person name="Shiratori A."/>
            <person name="Sudo H."/>
            <person name="Hosoiri T."/>
            <person name="Kaku Y."/>
            <person name="Kodaira H."/>
            <person name="Kondo H."/>
            <person name="Sugawara M."/>
            <person name="Takahashi M."/>
            <person name="Kanda K."/>
            <person name="Yokoi T."/>
            <person name="Furuya T."/>
            <person name="Kikkawa E."/>
            <person name="Omura Y."/>
            <person name="Abe K."/>
            <person name="Kamihara K."/>
            <person name="Katsuta N."/>
            <person name="Sato K."/>
            <person name="Tanikawa M."/>
            <person name="Yamazaki M."/>
            <person name="Ninomiya K."/>
            <person name="Ishibashi T."/>
            <person name="Yamashita H."/>
            <person name="Murakawa K."/>
            <person name="Fujimori K."/>
            <person name="Tanai H."/>
            <person name="Kimata M."/>
            <person name="Watanabe M."/>
            <person name="Hiraoka S."/>
            <person name="Chiba Y."/>
            <person name="Ishida S."/>
            <person name="Ono Y."/>
            <person name="Takiguchi S."/>
            <person name="Watanabe S."/>
            <person name="Yosida M."/>
            <person name="Hotuta T."/>
            <person name="Kusano J."/>
            <person name="Kanehori K."/>
            <person name="Takahashi-Fujii A."/>
            <person name="Hara H."/>
            <person name="Tanase T.-O."/>
            <person name="Nomura Y."/>
            <person name="Togiya S."/>
            <person name="Komai F."/>
            <person name="Hara R."/>
            <person name="Takeuchi K."/>
            <person name="Arita M."/>
            <person name="Imose N."/>
            <person name="Musashino K."/>
            <person name="Yuuki H."/>
            <person name="Oshima A."/>
            <person name="Sasaki N."/>
            <person name="Aotsuka S."/>
            <person name="Yoshikawa Y."/>
            <person name="Matsunawa H."/>
            <person name="Ichihara T."/>
            <person name="Shiohata N."/>
            <person name="Sano S."/>
            <person name="Moriya S."/>
            <person name="Momiyama H."/>
            <person name="Satoh N."/>
            <person name="Takami S."/>
            <person name="Terashima Y."/>
            <person name="Suzuki O."/>
            <person name="Nakagawa S."/>
            <person name="Senoh A."/>
            <person name="Mizoguchi H."/>
            <person name="Goto Y."/>
            <person name="Shimizu F."/>
            <person name="Wakebe H."/>
            <person name="Hishigaki H."/>
            <person name="Watanabe T."/>
            <person name="Sugiyama A."/>
            <person name="Takemoto M."/>
            <person name="Kawakami B."/>
            <person name="Yamazaki M."/>
            <person name="Watanabe K."/>
            <person name="Kumagai A."/>
            <person name="Itakura S."/>
            <person name="Fukuzumi Y."/>
            <person name="Fujimori Y."/>
            <person name="Komiyama M."/>
            <person name="Tashiro H."/>
            <person name="Tanigami A."/>
            <person name="Fujiwara T."/>
            <person name="Ono T."/>
            <person name="Yamada K."/>
            <person name="Fujii Y."/>
            <person name="Ozaki K."/>
            <person name="Hirao M."/>
            <person name="Ohmori Y."/>
            <person name="Kawabata A."/>
            <person name="Hikiji T."/>
            <person name="Kobatake N."/>
            <person name="Inagaki H."/>
            <person name="Ikema Y."/>
            <person name="Okamoto S."/>
            <person name="Okitani R."/>
            <person name="Kawakami T."/>
            <person name="Noguchi S."/>
            <person name="Itoh T."/>
            <person name="Shigeta K."/>
            <person name="Senba T."/>
            <person name="Matsumura K."/>
            <person name="Nakajima Y."/>
            <person name="Mizuno T."/>
            <person name="Morinaga M."/>
            <person name="Sasaki M."/>
            <person name="Togashi T."/>
            <person name="Oyama M."/>
            <person name="Hata H."/>
            <person name="Watanabe M."/>
            <person name="Komatsu T."/>
            <person name="Mizushima-Sugano J."/>
            <person name="Satoh T."/>
            <person name="Shirai Y."/>
            <person name="Takahashi Y."/>
            <person name="Nakagawa K."/>
            <person name="Okumura K."/>
            <person name="Nagase T."/>
            <person name="Nomura N."/>
            <person name="Kikuchi H."/>
            <person name="Masuho Y."/>
            <person name="Yamashita R."/>
            <person name="Nakai K."/>
            <person name="Yada T."/>
            <person name="Nakamura Y."/>
            <person name="Ohara O."/>
            <person name="Isogai T."/>
            <person name="Sugano S."/>
        </authorList>
    </citation>
    <scope>NUCLEOTIDE SEQUENCE [LARGE SCALE MRNA] (ISOFORMS 1 AND 2)</scope>
    <source>
        <tissue>Hippocampus</tissue>
        <tissue>Kidney epithelium</tissue>
    </source>
</reference>
<reference key="3">
    <citation type="journal article" date="2004" name="Nature">
        <title>The DNA sequence and comparative analysis of human chromosome 5.</title>
        <authorList>
            <person name="Schmutz J."/>
            <person name="Martin J."/>
            <person name="Terry A."/>
            <person name="Couronne O."/>
            <person name="Grimwood J."/>
            <person name="Lowry S."/>
            <person name="Gordon L.A."/>
            <person name="Scott D."/>
            <person name="Xie G."/>
            <person name="Huang W."/>
            <person name="Hellsten U."/>
            <person name="Tran-Gyamfi M."/>
            <person name="She X."/>
            <person name="Prabhakar S."/>
            <person name="Aerts A."/>
            <person name="Altherr M."/>
            <person name="Bajorek E."/>
            <person name="Black S."/>
            <person name="Branscomb E."/>
            <person name="Caoile C."/>
            <person name="Challacombe J.F."/>
            <person name="Chan Y.M."/>
            <person name="Denys M."/>
            <person name="Detter J.C."/>
            <person name="Escobar J."/>
            <person name="Flowers D."/>
            <person name="Fotopulos D."/>
            <person name="Glavina T."/>
            <person name="Gomez M."/>
            <person name="Gonzales E."/>
            <person name="Goodstein D."/>
            <person name="Grigoriev I."/>
            <person name="Groza M."/>
            <person name="Hammon N."/>
            <person name="Hawkins T."/>
            <person name="Haydu L."/>
            <person name="Israni S."/>
            <person name="Jett J."/>
            <person name="Kadner K."/>
            <person name="Kimball H."/>
            <person name="Kobayashi A."/>
            <person name="Lopez F."/>
            <person name="Lou Y."/>
            <person name="Martinez D."/>
            <person name="Medina C."/>
            <person name="Morgan J."/>
            <person name="Nandkeshwar R."/>
            <person name="Noonan J.P."/>
            <person name="Pitluck S."/>
            <person name="Pollard M."/>
            <person name="Predki P."/>
            <person name="Priest J."/>
            <person name="Ramirez L."/>
            <person name="Retterer J."/>
            <person name="Rodriguez A."/>
            <person name="Rogers S."/>
            <person name="Salamov A."/>
            <person name="Salazar A."/>
            <person name="Thayer N."/>
            <person name="Tice H."/>
            <person name="Tsai M."/>
            <person name="Ustaszewska A."/>
            <person name="Vo N."/>
            <person name="Wheeler J."/>
            <person name="Wu K."/>
            <person name="Yang J."/>
            <person name="Dickson M."/>
            <person name="Cheng J.-F."/>
            <person name="Eichler E.E."/>
            <person name="Olsen A."/>
            <person name="Pennacchio L.A."/>
            <person name="Rokhsar D.S."/>
            <person name="Richardson P."/>
            <person name="Lucas S.M."/>
            <person name="Myers R.M."/>
            <person name="Rubin E.M."/>
        </authorList>
    </citation>
    <scope>NUCLEOTIDE SEQUENCE [LARGE SCALE GENOMIC DNA]</scope>
</reference>
<reference key="4">
    <citation type="submission" date="2005-07" db="EMBL/GenBank/DDBJ databases">
        <authorList>
            <person name="Mural R.J."/>
            <person name="Istrail S."/>
            <person name="Sutton G.G."/>
            <person name="Florea L."/>
            <person name="Halpern A.L."/>
            <person name="Mobarry C.M."/>
            <person name="Lippert R."/>
            <person name="Walenz B."/>
            <person name="Shatkay H."/>
            <person name="Dew I."/>
            <person name="Miller J.R."/>
            <person name="Flanigan M.J."/>
            <person name="Edwards N.J."/>
            <person name="Bolanos R."/>
            <person name="Fasulo D."/>
            <person name="Halldorsson B.V."/>
            <person name="Hannenhalli S."/>
            <person name="Turner R."/>
            <person name="Yooseph S."/>
            <person name="Lu F."/>
            <person name="Nusskern D.R."/>
            <person name="Shue B.C."/>
            <person name="Zheng X.H."/>
            <person name="Zhong F."/>
            <person name="Delcher A.L."/>
            <person name="Huson D.H."/>
            <person name="Kravitz S.A."/>
            <person name="Mouchard L."/>
            <person name="Reinert K."/>
            <person name="Remington K.A."/>
            <person name="Clark A.G."/>
            <person name="Waterman M.S."/>
            <person name="Eichler E.E."/>
            <person name="Adams M.D."/>
            <person name="Hunkapiller M.W."/>
            <person name="Myers E.W."/>
            <person name="Venter J.C."/>
        </authorList>
    </citation>
    <scope>NUCLEOTIDE SEQUENCE [LARGE SCALE GENOMIC DNA]</scope>
</reference>
<reference key="5">
    <citation type="journal article" date="2004" name="Genome Res.">
        <title>The status, quality, and expansion of the NIH full-length cDNA project: the Mammalian Gene Collection (MGC).</title>
        <authorList>
            <consortium name="The MGC Project Team"/>
        </authorList>
    </citation>
    <scope>NUCLEOTIDE SEQUENCE [LARGE SCALE MRNA] (ISOFORM 2)</scope>
    <source>
        <tissue>Pancreas</tissue>
    </source>
</reference>
<reference key="6">
    <citation type="journal article" date="1993" name="J. Biol. Chem.">
        <title>Cell cycle regulation of a human cyclin-like gene encoding uracil-DNA glycosylase.</title>
        <authorList>
            <person name="Muller S.J."/>
            <person name="Caradonna S."/>
        </authorList>
    </citation>
    <scope>IDENTIFICATION</scope>
    <scope>DEVELOPMENTAL STAGE</scope>
</reference>
<reference key="7">
    <citation type="journal article" date="2006" name="Gene">
        <title>The cyclin-like uracil DNA glycosylase (UDG) of murine oocytes and its relationship to human and chimpanzee homologues.</title>
        <authorList>
            <person name="Hirst R."/>
            <person name="Gosden R."/>
            <person name="Miller D."/>
        </authorList>
    </citation>
    <scope>IDENTIFICATION</scope>
</reference>
<reference key="8">
    <citation type="journal article" date="2008" name="Mol. Cell">
        <title>Kinase-selective enrichment enables quantitative phosphoproteomics of the kinome across the cell cycle.</title>
        <authorList>
            <person name="Daub H."/>
            <person name="Olsen J.V."/>
            <person name="Bairlein M."/>
            <person name="Gnad F."/>
            <person name="Oppermann F.S."/>
            <person name="Korner R."/>
            <person name="Greff Z."/>
            <person name="Keri G."/>
            <person name="Stemmann O."/>
            <person name="Mann M."/>
        </authorList>
    </citation>
    <scope>PHOSPHORYLATION [LARGE SCALE ANALYSIS] AT SER-81</scope>
    <scope>IDENTIFICATION BY MASS SPECTROMETRY [LARGE SCALE ANALYSIS]</scope>
    <source>
        <tissue>Cervix carcinoma</tissue>
    </source>
</reference>
<reference key="9">
    <citation type="journal article" date="2009" name="Mol. Cell. Proteomics">
        <title>Large-scale proteomics analysis of the human kinome.</title>
        <authorList>
            <person name="Oppermann F.S."/>
            <person name="Gnad F."/>
            <person name="Olsen J.V."/>
            <person name="Hornberger R."/>
            <person name="Greff Z."/>
            <person name="Keri G."/>
            <person name="Mann M."/>
            <person name="Daub H."/>
        </authorList>
    </citation>
    <scope>PHOSPHORYLATION [LARGE SCALE ANALYSIS] AT SER-81</scope>
    <scope>IDENTIFICATION BY MASS SPECTROMETRY [LARGE SCALE ANALYSIS]</scope>
</reference>
<reference key="10">
    <citation type="journal article" date="2013" name="J. Proteome Res.">
        <title>Toward a comprehensive characterization of a human cancer cell phosphoproteome.</title>
        <authorList>
            <person name="Zhou H."/>
            <person name="Di Palma S."/>
            <person name="Preisinger C."/>
            <person name="Peng M."/>
            <person name="Polat A.N."/>
            <person name="Heck A.J."/>
            <person name="Mohammed S."/>
        </authorList>
    </citation>
    <scope>PHOSPHORYLATION [LARGE SCALE ANALYSIS] AT SER-81</scope>
    <scope>IDENTIFICATION BY MASS SPECTROMETRY [LARGE SCALE ANALYSIS]</scope>
    <source>
        <tissue>Cervix carcinoma</tissue>
    </source>
</reference>
<reference key="11">
    <citation type="journal article" date="2017" name="Sci. Rep.">
        <title>A systematic analysis of orphan cyclins reveals CNTD2 as a new oncogenic driver in lung cancer.</title>
        <authorList>
            <person name="Gasa L."/>
            <person name="Sanchez-Botet A."/>
            <person name="Quandt E."/>
            <person name="Hernandez-Ortega S."/>
            <person name="Jimenez J."/>
            <person name="Carrasco-Garcia M.A."/>
            <person name="Simonetti S."/>
            <person name="Kron S.J."/>
            <person name="Ribeiro M.P."/>
            <person name="Nadal E."/>
            <person name="Villanueva A."/>
            <person name="Clotet J."/>
        </authorList>
    </citation>
    <scope>SUBCELLULAR LOCATION</scope>
</reference>
<reference key="12">
    <citation type="journal article" date="2018" name="Sci. Rep.">
        <title>The atypical cyclin CNTD2 promotes colon cancer cell proliferation and migration.</title>
        <authorList>
            <person name="Sanchez-Botet A."/>
            <person name="Gasa L."/>
            <person name="Quandt E."/>
            <person name="Hernandez-Ortega S."/>
            <person name="Jimenez J."/>
            <person name="Mezquita P."/>
            <person name="Carrasco-Garcia M.A."/>
            <person name="Kron S.J."/>
            <person name="Vidal A."/>
            <person name="Villanueva A."/>
            <person name="Ribeiro M.P.C."/>
            <person name="Clotet J."/>
        </authorList>
    </citation>
    <scope>SUBCELLULAR LOCATION</scope>
</reference>
<reference key="13">
    <citation type="journal article" date="2014" name="Nat. Genet.">
        <title>Mutations in CCNO result in congenital mucociliary clearance disorder with reduced generation of multiple motile cilia.</title>
        <authorList>
            <person name="Wallmeier J."/>
            <person name="Al-Mutairi D.A."/>
            <person name="Chen C.T."/>
            <person name="Loges N.T."/>
            <person name="Pennekamp P."/>
            <person name="Menchen T."/>
            <person name="Ma L."/>
            <person name="Shamseldin H.E."/>
            <person name="Olbrich H."/>
            <person name="Dougherty G.W."/>
            <person name="Werner C."/>
            <person name="Alsabah B.H."/>
            <person name="Koehler G."/>
            <person name="Jaspers M."/>
            <person name="Boon M."/>
            <person name="Griese M."/>
            <person name="Schmitt-Grohe S."/>
            <person name="Zimmermann T."/>
            <person name="Koerner-Rettberg C."/>
            <person name="Horak E."/>
            <person name="Kintner C."/>
            <person name="Alkuraya F.S."/>
            <person name="Omran H."/>
        </authorList>
    </citation>
    <scope>VARIANT CILD29 ARG-239</scope>
    <scope>INVOLVEMENT IN CILD29</scope>
    <scope>FUNCTION</scope>
    <scope>SUBCELLULAR LOCATION</scope>
    <scope>TISSUE SPECIFICITY</scope>
</reference>
<reference key="14">
    <citation type="journal article" date="2016" name="Hum. Mutat.">
        <title>Systematic analysis of CCNO variants in a defined population: implications for clinical phenotype and differential diagnosis.</title>
        <authorList>
            <consortium name="Israeli PCD Consortium Investigators"/>
            <person name="Amirav I."/>
            <person name="Wallmeier J."/>
            <person name="Loges N.T."/>
            <person name="Menchen T."/>
            <person name="Pennekamp P."/>
            <person name="Mussaffi H."/>
            <person name="Abitbul R."/>
            <person name="Avital A."/>
            <person name="Bentur L."/>
            <person name="Dougherty G.W."/>
            <person name="Nael E."/>
            <person name="Lavie M."/>
            <person name="Olbrich H."/>
            <person name="Werner C."/>
            <person name="Kintner C."/>
            <person name="Omran H."/>
        </authorList>
    </citation>
    <scope>VARIANT CILD29 PRO-213</scope>
    <scope>CHARACTERIZATION OF VARIANT CILD29</scope>
    <scope>FUNCTION</scope>
</reference>
<evidence type="ECO:0000256" key="1">
    <source>
        <dbReference type="SAM" id="MobiDB-lite"/>
    </source>
</evidence>
<evidence type="ECO:0000269" key="2">
    <source>
    </source>
</evidence>
<evidence type="ECO:0000269" key="3">
    <source>
    </source>
</evidence>
<evidence type="ECO:0000269" key="4">
    <source>
    </source>
</evidence>
<evidence type="ECO:0000269" key="5">
    <source>
    </source>
</evidence>
<evidence type="ECO:0000269" key="6">
    <source>
    </source>
</evidence>
<evidence type="ECO:0000303" key="7">
    <source>
    </source>
</evidence>
<evidence type="ECO:0000303" key="8">
    <source>
    </source>
</evidence>
<evidence type="ECO:0000305" key="9"/>
<evidence type="ECO:0000305" key="10">
    <source>
    </source>
</evidence>
<evidence type="ECO:0000305" key="11">
    <source>
    </source>
</evidence>
<evidence type="ECO:0000312" key="12">
    <source>
        <dbReference type="HGNC" id="HGNC:18576"/>
    </source>
</evidence>
<evidence type="ECO:0007744" key="13">
    <source>
    </source>
</evidence>
<evidence type="ECO:0007744" key="14">
    <source>
    </source>
</evidence>
<evidence type="ECO:0007744" key="15">
    <source>
    </source>
</evidence>
<name>CCNO_HUMAN</name>
<proteinExistence type="evidence at protein level"/>
<accession>P22674</accession>
<accession>A8K1W5</accession>
<accession>Q0P6J2</accession>
<accession>Q9H6B0</accession>
<accession>Q9UMD5</accession>
<sequence length="350" mass="38096">MVTPCPTSPSSPAARAGRRDNDQNLRAPVKKSRRPRLRRKQPLHPLNPCPLPGDSGICDLFESPSSGSDGAESPSAARGGSPLPGPAQPVAQLDLQTFRDYGQSCYAFRKAQESHFHPREALARQPQVTAESRCKLLSWLIPVHRQFGLSFESLCLTVNTLDRFLTTTPVAADCFQLLGVTSLLIACKQVEVHPPRVKQLLALCCGAFSRQQLCNLECIVLHKLHFTLGAPTISFFLEHFTHARVEAGQAEASEALEAQALARGVAELSLADYAFTSYSPSLLAICCLALADRMLRVSRPVDLRLGDHPEAALEDCMGKLQLLVAINSTSLTHMLPVQICEKCSLPPSSK</sequence>
<organism>
    <name type="scientific">Homo sapiens</name>
    <name type="common">Human</name>
    <dbReference type="NCBI Taxonomy" id="9606"/>
    <lineage>
        <taxon>Eukaryota</taxon>
        <taxon>Metazoa</taxon>
        <taxon>Chordata</taxon>
        <taxon>Craniata</taxon>
        <taxon>Vertebrata</taxon>
        <taxon>Euteleostomi</taxon>
        <taxon>Mammalia</taxon>
        <taxon>Eutheria</taxon>
        <taxon>Euarchontoglires</taxon>
        <taxon>Primates</taxon>
        <taxon>Haplorrhini</taxon>
        <taxon>Catarrhini</taxon>
        <taxon>Hominidae</taxon>
        <taxon>Homo</taxon>
    </lineage>
</organism>
<feature type="chain" id="PRO_0000176175" description="Cyclin-O">
    <location>
        <begin position="1"/>
        <end position="350"/>
    </location>
</feature>
<feature type="region of interest" description="Disordered" evidence="1">
    <location>
        <begin position="1"/>
        <end position="89"/>
    </location>
</feature>
<feature type="compositionally biased region" description="Basic residues" evidence="1">
    <location>
        <begin position="28"/>
        <end position="42"/>
    </location>
</feature>
<feature type="modified residue" description="Phosphoserine" evidence="13 14 15">
    <location>
        <position position="81"/>
    </location>
</feature>
<feature type="splice variant" id="VSP_021655" description="In isoform 2." evidence="7 8">
    <original>TAE</original>
    <variation>RCW</variation>
    <location>
        <begin position="129"/>
        <end position="131"/>
    </location>
</feature>
<feature type="splice variant" id="VSP_021656" description="In isoform 2." evidence="7 8">
    <location>
        <begin position="132"/>
        <end position="350"/>
    </location>
</feature>
<feature type="sequence variant" id="VAR_029081" description="In dbSNP:rs13169396.">
    <original>L</original>
    <variation>M</variation>
    <location>
        <position position="161"/>
    </location>
</feature>
<feature type="sequence variant" id="VAR_077581" description="In CILD29; decreases formation of basal bodies in multiciliated cells; dbSNP:rs775051461." evidence="3">
    <original>L</original>
    <variation>P</variation>
    <location>
        <position position="213"/>
    </location>
</feature>
<feature type="sequence variant" id="VAR_071197" description="In CILD29; dbSNP:rs797045150." evidence="2">
    <original>H</original>
    <variation>R</variation>
    <location>
        <position position="239"/>
    </location>
</feature>
<feature type="sequence conflict" description="In Ref. 2; BAB15351." evidence="9" ref="2">
    <original>E</original>
    <variation>G</variation>
    <location>
        <position position="246"/>
    </location>
</feature>
<protein>
    <recommendedName>
        <fullName evidence="9">Cyclin-O</fullName>
    </recommendedName>
</protein>
<keyword id="KW-0025">Alternative splicing</keyword>
<keyword id="KW-0131">Cell cycle</keyword>
<keyword id="KW-0132">Cell division</keyword>
<keyword id="KW-1186">Ciliopathy</keyword>
<keyword id="KW-0970">Cilium biogenesis/degradation</keyword>
<keyword id="KW-0195">Cyclin</keyword>
<keyword id="KW-0963">Cytoplasm</keyword>
<keyword id="KW-0225">Disease variant</keyword>
<keyword id="KW-0539">Nucleus</keyword>
<keyword id="KW-0597">Phosphoprotein</keyword>
<keyword id="KW-0990">Primary ciliary dyskinesia</keyword>
<keyword id="KW-1267">Proteomics identification</keyword>
<keyword id="KW-1185">Reference proteome</keyword>
<comment type="function">
    <text evidence="2 3">Specifically required for generation of multiciliated cells, possibly by promoting a cell cycle state compatible with centriole amplification and maturation. Acts downstream of MCIDAS to promote mother centriole amplification and maturation in preparation for apical docking.</text>
</comment>
<comment type="interaction">
    <interactant intactId="EBI-2556878">
        <id>P22674</id>
    </interactant>
    <interactant intactId="EBI-11741437">
        <id>Q08117-2</id>
        <label>TLE5</label>
    </interactant>
    <organismsDiffer>false</organismsDiffer>
    <experiments>3</experiments>
</comment>
<comment type="subcellular location">
    <subcellularLocation>
        <location evidence="2">Cytoplasm</location>
    </subcellularLocation>
    <subcellularLocation>
        <location evidence="4 5">Nucleus</location>
        <location evidence="4 5">Nucleolus</location>
    </subcellularLocation>
    <text evidence="2">Localizes to the apical part of cytoplasm.</text>
</comment>
<comment type="alternative products">
    <event type="alternative splicing"/>
    <isoform>
        <id>P22674-1</id>
        <name>1</name>
        <sequence type="displayed"/>
    </isoform>
    <isoform>
        <id>P22674-2</id>
        <name>2</name>
        <sequence type="described" ref="VSP_021655 VSP_021656"/>
    </isoform>
</comment>
<comment type="tissue specificity">
    <text evidence="2">Present in respiratory cells (at protein level).</text>
</comment>
<comment type="developmental stage">
    <text evidence="6">Maximum levels during G(1) phase. Levels decrease through S and G(2) phases.</text>
</comment>
<comment type="disease" evidence="2 3">
    <disease id="DI-04144">
        <name>Ciliary dyskinesia, primary, 29</name>
        <acronym>CILD29</acronym>
        <description>A disorder characterized by abnormalities of motile cilia. Respiratory infections leading to chronic inflammation and bronchiectasis are recurrent, due to defects in the respiratory cilia. CILD29 patients do not exhibit situs inversus, a congenital abnormality in which visceral organs are opposite to their normal positions (situs solitus) due to lateral transposition.</description>
        <dbReference type="MIM" id="615872"/>
    </disease>
    <text evidence="2">The disease is caused by variants affecting the gene represented in this entry. Marked reduction of cilia in multiciliate cells due to defective mother centriole generation and placement. Remaining cilia correctly express axonemal motor proteins, are motile and do not show beating defects. Defects are probably caused by a strong reduction in the number of multiple motile cilia covering the cell surface in respiratory epithelial cells (PubMed:24747639).</text>
</comment>
<comment type="similarity">
    <text evidence="9">Belongs to the cyclin family.</text>
</comment>
<comment type="caution">
    <text evidence="10 11">Was originally thought to have uracil-DNA glycosylase (UDG) activity and wrongly named UNG2 and UDG2 (PubMed:2001396). It was later shown that it is a member of the cyclin family (PubMed:8419333). UNG2 corresponds to the isoform 2 of UNG gene.</text>
</comment>
<comment type="sequence caution" evidence="9">
    <conflict type="miscellaneous discrepancy">
        <sequence resource="EMBL-CDS" id="AAB05817"/>
    </conflict>
    <text>Sequencing errors.</text>
</comment>
<comment type="sequence caution" evidence="9">
    <conflict type="miscellaneous discrepancy">
        <sequence resource="EMBL-CDS" id="CAA36728"/>
    </conflict>
    <text>Sequencing errors.</text>
</comment>
<gene>
    <name evidence="12" type="primary">CCNO</name>
</gene>